<organism evidence="9">
    <name type="scientific">Danio rerio</name>
    <name type="common">Zebrafish</name>
    <name type="synonym">Brachydanio rerio</name>
    <dbReference type="NCBI Taxonomy" id="7955"/>
    <lineage>
        <taxon>Eukaryota</taxon>
        <taxon>Metazoa</taxon>
        <taxon>Chordata</taxon>
        <taxon>Craniata</taxon>
        <taxon>Vertebrata</taxon>
        <taxon>Euteleostomi</taxon>
        <taxon>Actinopterygii</taxon>
        <taxon>Neopterygii</taxon>
        <taxon>Teleostei</taxon>
        <taxon>Ostariophysi</taxon>
        <taxon>Cypriniformes</taxon>
        <taxon>Danionidae</taxon>
        <taxon>Danioninae</taxon>
        <taxon>Danio</taxon>
    </lineage>
</organism>
<protein>
    <recommendedName>
        <fullName evidence="11">Iroquois homeobox protein 6a</fullName>
    </recommendedName>
</protein>
<name>IRX6A_DANRE</name>
<evidence type="ECO:0000250" key="1">
    <source>
        <dbReference type="UniProtKB" id="Q9ER75"/>
    </source>
</evidence>
<evidence type="ECO:0000255" key="2">
    <source>
        <dbReference type="PROSITE-ProRule" id="PRU00108"/>
    </source>
</evidence>
<evidence type="ECO:0000256" key="3">
    <source>
        <dbReference type="SAM" id="MobiDB-lite"/>
    </source>
</evidence>
<evidence type="ECO:0000269" key="4">
    <source>
    </source>
</evidence>
<evidence type="ECO:0000269" key="5">
    <source>
    </source>
</evidence>
<evidence type="ECO:0000305" key="6"/>
<evidence type="ECO:0000312" key="7">
    <source>
        <dbReference type="EMBL" id="AAH95113.1"/>
    </source>
</evidence>
<evidence type="ECO:0000312" key="8">
    <source>
        <dbReference type="EMBL" id="AAI65182.1"/>
    </source>
</evidence>
<evidence type="ECO:0000312" key="9">
    <source>
        <dbReference type="Proteomes" id="UP000000437"/>
    </source>
</evidence>
<evidence type="ECO:0000312" key="10">
    <source>
        <dbReference type="RefSeq" id="NP_001018869.1"/>
    </source>
</evidence>
<evidence type="ECO:0000312" key="11">
    <source>
        <dbReference type="ZFIN" id="ZDB-GENE-040712-5"/>
    </source>
</evidence>
<keyword id="KW-0238">DNA-binding</keyword>
<keyword id="KW-0371">Homeobox</keyword>
<keyword id="KW-0539">Nucleus</keyword>
<keyword id="KW-1185">Reference proteome</keyword>
<gene>
    <name evidence="11" type="primary">irx6a</name>
    <name evidence="10" type="synonym">ziro6a</name>
    <name evidence="10" type="ORF">zgc:109993</name>
</gene>
<dbReference type="EMBL" id="BX294178">
    <property type="status" value="NOT_ANNOTATED_CDS"/>
    <property type="molecule type" value="Genomic_DNA"/>
</dbReference>
<dbReference type="EMBL" id="BC095113">
    <property type="protein sequence ID" value="AAH95113.1"/>
    <property type="molecule type" value="mRNA"/>
</dbReference>
<dbReference type="EMBL" id="BC165182">
    <property type="protein sequence ID" value="AAI65182.1"/>
    <property type="molecule type" value="mRNA"/>
</dbReference>
<dbReference type="RefSeq" id="NP_001018869.1">
    <property type="nucleotide sequence ID" value="NM_001023575.1"/>
</dbReference>
<dbReference type="SMR" id="Q503Z8"/>
<dbReference type="STRING" id="7955.ENSDARP00000045627"/>
<dbReference type="PaxDb" id="7955-ENSDARP00000045627"/>
<dbReference type="Ensembl" id="ENSDART00000045628">
    <property type="protein sequence ID" value="ENSDARP00000045627"/>
    <property type="gene ID" value="ENSDARG00000034420"/>
</dbReference>
<dbReference type="Ensembl" id="ENSDART00000193324">
    <property type="protein sequence ID" value="ENSDARP00000148767"/>
    <property type="gene ID" value="ENSDARG00000034420"/>
</dbReference>
<dbReference type="GeneID" id="474317"/>
<dbReference type="KEGG" id="dre:474317"/>
<dbReference type="AGR" id="ZFIN:ZDB-GENE-040712-5"/>
<dbReference type="CTD" id="474317"/>
<dbReference type="ZFIN" id="ZDB-GENE-040712-5">
    <property type="gene designation" value="irx6a"/>
</dbReference>
<dbReference type="eggNOG" id="KOG0773">
    <property type="taxonomic scope" value="Eukaryota"/>
</dbReference>
<dbReference type="HOGENOM" id="CLU_042927_1_0_1"/>
<dbReference type="InParanoid" id="Q503Z8"/>
<dbReference type="OMA" id="SFHTFPC"/>
<dbReference type="OrthoDB" id="5399138at2759"/>
<dbReference type="TreeFam" id="TF319371"/>
<dbReference type="PRO" id="PR:Q503Z8"/>
<dbReference type="Proteomes" id="UP000000437">
    <property type="component" value="Chromosome 7"/>
</dbReference>
<dbReference type="Bgee" id="ENSDARG00000034420">
    <property type="expression patterns" value="Expressed in retina and 11 other cell types or tissues"/>
</dbReference>
<dbReference type="GO" id="GO:0005634">
    <property type="term" value="C:nucleus"/>
    <property type="evidence" value="ECO:0000318"/>
    <property type="project" value="GO_Central"/>
</dbReference>
<dbReference type="GO" id="GO:0000981">
    <property type="term" value="F:DNA-binding transcription factor activity, RNA polymerase II-specific"/>
    <property type="evidence" value="ECO:0000318"/>
    <property type="project" value="GO_Central"/>
</dbReference>
<dbReference type="GO" id="GO:0000978">
    <property type="term" value="F:RNA polymerase II cis-regulatory region sequence-specific DNA binding"/>
    <property type="evidence" value="ECO:0000318"/>
    <property type="project" value="GO_Central"/>
</dbReference>
<dbReference type="GO" id="GO:0048468">
    <property type="term" value="P:cell development"/>
    <property type="evidence" value="ECO:0000318"/>
    <property type="project" value="GO_Central"/>
</dbReference>
<dbReference type="GO" id="GO:0030182">
    <property type="term" value="P:neuron differentiation"/>
    <property type="evidence" value="ECO:0000318"/>
    <property type="project" value="GO_Central"/>
</dbReference>
<dbReference type="GO" id="GO:0006357">
    <property type="term" value="P:regulation of transcription by RNA polymerase II"/>
    <property type="evidence" value="ECO:0000318"/>
    <property type="project" value="GO_Central"/>
</dbReference>
<dbReference type="CDD" id="cd00086">
    <property type="entry name" value="homeodomain"/>
    <property type="match status" value="1"/>
</dbReference>
<dbReference type="FunFam" id="1.10.10.60:FF:000003">
    <property type="entry name" value="Iroquois-class homeobox protein IRX"/>
    <property type="match status" value="1"/>
</dbReference>
<dbReference type="Gene3D" id="1.10.10.60">
    <property type="entry name" value="Homeodomain-like"/>
    <property type="match status" value="1"/>
</dbReference>
<dbReference type="InterPro" id="IPR001356">
    <property type="entry name" value="HD"/>
</dbReference>
<dbReference type="InterPro" id="IPR017970">
    <property type="entry name" value="Homeobox_CS"/>
</dbReference>
<dbReference type="InterPro" id="IPR009057">
    <property type="entry name" value="Homeodomain-like_sf"/>
</dbReference>
<dbReference type="InterPro" id="IPR008422">
    <property type="entry name" value="KN_HD"/>
</dbReference>
<dbReference type="PANTHER" id="PTHR11211:SF47">
    <property type="entry name" value="IROQUOIS HOMEOBOX PROTEIN 6A"/>
    <property type="match status" value="1"/>
</dbReference>
<dbReference type="PANTHER" id="PTHR11211">
    <property type="entry name" value="IROQUOIS-CLASS HOMEODOMAIN PROTEIN IRX"/>
    <property type="match status" value="1"/>
</dbReference>
<dbReference type="Pfam" id="PF05920">
    <property type="entry name" value="Homeobox_KN"/>
    <property type="match status" value="1"/>
</dbReference>
<dbReference type="SMART" id="SM00389">
    <property type="entry name" value="HOX"/>
    <property type="match status" value="1"/>
</dbReference>
<dbReference type="SUPFAM" id="SSF46689">
    <property type="entry name" value="Homeodomain-like"/>
    <property type="match status" value="1"/>
</dbReference>
<dbReference type="PROSITE" id="PS00027">
    <property type="entry name" value="HOMEOBOX_1"/>
    <property type="match status" value="1"/>
</dbReference>
<dbReference type="PROSITE" id="PS50071">
    <property type="entry name" value="HOMEOBOX_2"/>
    <property type="match status" value="1"/>
</dbReference>
<comment type="function">
    <text evidence="1 5">Transcription factor (By similarity). Binds to the iroquois binding site (IBS) motif of target genes to regulate gene expression; functions as a transcriptional activator or repressor (By similarity). In concert with irx5a, plays a role in visual performance (PubMed:33891002).</text>
</comment>
<comment type="subcellular location">
    <subcellularLocation>
        <location evidence="2">Nucleus</location>
    </subcellularLocation>
</comment>
<comment type="developmental stage">
    <text evidence="4">Expressed in the retinal ganglion cells (RGC) during retinogenesis (PubMed:21046643). Expression is not detected in the retina before 36 hours post fertilization (hpf) but is highly expressed at 48 hpf during later stages of RGC neurogenesis (PubMed:21046643).</text>
</comment>
<comment type="similarity">
    <text evidence="6">Belongs to the TALE/IRO homeobox family.</text>
</comment>
<reference evidence="10" key="1">
    <citation type="journal article" date="2004" name="Dev. Genes Evol.">
        <title>Organization of Iroquois genes in fish.</title>
        <authorList>
            <person name="Dildrop R."/>
            <person name="Ruther U."/>
        </authorList>
    </citation>
    <scope>NUCLEOTIDE SEQUENCE [GENOMIC DNA]</scope>
</reference>
<reference evidence="9" key="2">
    <citation type="journal article" date="2013" name="Nature">
        <title>The zebrafish reference genome sequence and its relationship to the human genome.</title>
        <authorList>
            <person name="Howe K."/>
            <person name="Clark M.D."/>
            <person name="Torroja C.F."/>
            <person name="Torrance J."/>
            <person name="Berthelot C."/>
            <person name="Muffato M."/>
            <person name="Collins J.E."/>
            <person name="Humphray S."/>
            <person name="McLaren K."/>
            <person name="Matthews L."/>
            <person name="McLaren S."/>
            <person name="Sealy I."/>
            <person name="Caccamo M."/>
            <person name="Churcher C."/>
            <person name="Scott C."/>
            <person name="Barrett J.C."/>
            <person name="Koch R."/>
            <person name="Rauch G.J."/>
            <person name="White S."/>
            <person name="Chow W."/>
            <person name="Kilian B."/>
            <person name="Quintais L.T."/>
            <person name="Guerra-Assuncao J.A."/>
            <person name="Zhou Y."/>
            <person name="Gu Y."/>
            <person name="Yen J."/>
            <person name="Vogel J.H."/>
            <person name="Eyre T."/>
            <person name="Redmond S."/>
            <person name="Banerjee R."/>
            <person name="Chi J."/>
            <person name="Fu B."/>
            <person name="Langley E."/>
            <person name="Maguire S.F."/>
            <person name="Laird G.K."/>
            <person name="Lloyd D."/>
            <person name="Kenyon E."/>
            <person name="Donaldson S."/>
            <person name="Sehra H."/>
            <person name="Almeida-King J."/>
            <person name="Loveland J."/>
            <person name="Trevanion S."/>
            <person name="Jones M."/>
            <person name="Quail M."/>
            <person name="Willey D."/>
            <person name="Hunt A."/>
            <person name="Burton J."/>
            <person name="Sims S."/>
            <person name="McLay K."/>
            <person name="Plumb B."/>
            <person name="Davis J."/>
            <person name="Clee C."/>
            <person name="Oliver K."/>
            <person name="Clark R."/>
            <person name="Riddle C."/>
            <person name="Elliot D."/>
            <person name="Threadgold G."/>
            <person name="Harden G."/>
            <person name="Ware D."/>
            <person name="Begum S."/>
            <person name="Mortimore B."/>
            <person name="Kerry G."/>
            <person name="Heath P."/>
            <person name="Phillimore B."/>
            <person name="Tracey A."/>
            <person name="Corby N."/>
            <person name="Dunn M."/>
            <person name="Johnson C."/>
            <person name="Wood J."/>
            <person name="Clark S."/>
            <person name="Pelan S."/>
            <person name="Griffiths G."/>
            <person name="Smith M."/>
            <person name="Glithero R."/>
            <person name="Howden P."/>
            <person name="Barker N."/>
            <person name="Lloyd C."/>
            <person name="Stevens C."/>
            <person name="Harley J."/>
            <person name="Holt K."/>
            <person name="Panagiotidis G."/>
            <person name="Lovell J."/>
            <person name="Beasley H."/>
            <person name="Henderson C."/>
            <person name="Gordon D."/>
            <person name="Auger K."/>
            <person name="Wright D."/>
            <person name="Collins J."/>
            <person name="Raisen C."/>
            <person name="Dyer L."/>
            <person name="Leung K."/>
            <person name="Robertson L."/>
            <person name="Ambridge K."/>
            <person name="Leongamornlert D."/>
            <person name="McGuire S."/>
            <person name="Gilderthorp R."/>
            <person name="Griffiths C."/>
            <person name="Manthravadi D."/>
            <person name="Nichol S."/>
            <person name="Barker G."/>
            <person name="Whitehead S."/>
            <person name="Kay M."/>
            <person name="Brown J."/>
            <person name="Murnane C."/>
            <person name="Gray E."/>
            <person name="Humphries M."/>
            <person name="Sycamore N."/>
            <person name="Barker D."/>
            <person name="Saunders D."/>
            <person name="Wallis J."/>
            <person name="Babbage A."/>
            <person name="Hammond S."/>
            <person name="Mashreghi-Mohammadi M."/>
            <person name="Barr L."/>
            <person name="Martin S."/>
            <person name="Wray P."/>
            <person name="Ellington A."/>
            <person name="Matthews N."/>
            <person name="Ellwood M."/>
            <person name="Woodmansey R."/>
            <person name="Clark G."/>
            <person name="Cooper J."/>
            <person name="Tromans A."/>
            <person name="Grafham D."/>
            <person name="Skuce C."/>
            <person name="Pandian R."/>
            <person name="Andrews R."/>
            <person name="Harrison E."/>
            <person name="Kimberley A."/>
            <person name="Garnett J."/>
            <person name="Fosker N."/>
            <person name="Hall R."/>
            <person name="Garner P."/>
            <person name="Kelly D."/>
            <person name="Bird C."/>
            <person name="Palmer S."/>
            <person name="Gehring I."/>
            <person name="Berger A."/>
            <person name="Dooley C.M."/>
            <person name="Ersan-Urun Z."/>
            <person name="Eser C."/>
            <person name="Geiger H."/>
            <person name="Geisler M."/>
            <person name="Karotki L."/>
            <person name="Kirn A."/>
            <person name="Konantz J."/>
            <person name="Konantz M."/>
            <person name="Oberlander M."/>
            <person name="Rudolph-Geiger S."/>
            <person name="Teucke M."/>
            <person name="Lanz C."/>
            <person name="Raddatz G."/>
            <person name="Osoegawa K."/>
            <person name="Zhu B."/>
            <person name="Rapp A."/>
            <person name="Widaa S."/>
            <person name="Langford C."/>
            <person name="Yang F."/>
            <person name="Schuster S.C."/>
            <person name="Carter N.P."/>
            <person name="Harrow J."/>
            <person name="Ning Z."/>
            <person name="Herrero J."/>
            <person name="Searle S.M."/>
            <person name="Enright A."/>
            <person name="Geisler R."/>
            <person name="Plasterk R.H."/>
            <person name="Lee C."/>
            <person name="Westerfield M."/>
            <person name="de Jong P.J."/>
            <person name="Zon L.I."/>
            <person name="Postlethwait J.H."/>
            <person name="Nusslein-Volhard C."/>
            <person name="Hubbard T.J."/>
            <person name="Roest Crollius H."/>
            <person name="Rogers J."/>
            <person name="Stemple D.L."/>
        </authorList>
    </citation>
    <scope>NUCLEOTIDE SEQUENCE [LARGE SCALE GENOMIC DNA]</scope>
    <source>
        <strain evidence="9">Tuebingen</strain>
    </source>
</reference>
<reference evidence="7 8" key="3">
    <citation type="submission" date="2008-04" db="EMBL/GenBank/DDBJ databases">
        <authorList>
            <consortium name="NIH - Zebrafish Gene Collection (ZGC) project"/>
        </authorList>
    </citation>
    <scope>NUCLEOTIDE SEQUENCE [LARGE SCALE MRNA]</scope>
    <source>
        <tissue evidence="7 8">Eye</tissue>
    </source>
</reference>
<reference evidence="6" key="4">
    <citation type="journal article" date="2010" name="Dev. Dyn.">
        <title>A cascade of irx1a and irx2a controls shh expression during retinogenesis.</title>
        <authorList>
            <person name="Choy S.W."/>
            <person name="Cheng C.W."/>
            <person name="Lee S.T."/>
            <person name="Li V.W."/>
            <person name="Hui M.N."/>
            <person name="Hui C.C."/>
            <person name="Liu D."/>
            <person name="Cheng S.H."/>
        </authorList>
    </citation>
    <scope>DEVELOPMENTAL STAGE</scope>
</reference>
<reference evidence="6" key="5">
    <citation type="journal article" date="2021" name="Hum. Mol. Genet.">
        <title>A duplication on chromosome 16q12 affecting the IRXB gene cluster is associated with autosomal dominant cone dystrophy with early tritanopic color vision defect.</title>
        <authorList>
            <person name="Kohl S."/>
            <person name="Llavona P."/>
            <person name="Sauer A."/>
            <person name="Reuter P."/>
            <person name="Weisschuh N."/>
            <person name="Kempf M."/>
            <person name="Dehmelt F.A."/>
            <person name="Arrenberg A.B."/>
            <person name="Sliesoraityte I."/>
            <person name="Zrenner E."/>
            <person name="van Schooneveld M.J."/>
            <person name="Rudolph G."/>
            <person name="Kuehlewein L."/>
            <person name="Wissinger B."/>
        </authorList>
    </citation>
    <scope>FUNCTION</scope>
</reference>
<proteinExistence type="evidence at transcript level"/>
<feature type="chain" id="PRO_0000458116" description="Iroquois homeobox protein 6a">
    <location>
        <begin position="1"/>
        <end position="477"/>
    </location>
</feature>
<feature type="DNA-binding region" description="Homeobox" evidence="2">
    <location>
        <begin position="148"/>
        <end position="210"/>
    </location>
</feature>
<feature type="region of interest" description="Disordered" evidence="3">
    <location>
        <begin position="209"/>
        <end position="282"/>
    </location>
</feature>
<feature type="region of interest" description="Disordered" evidence="3">
    <location>
        <begin position="303"/>
        <end position="323"/>
    </location>
</feature>
<feature type="compositionally biased region" description="Basic and acidic residues" evidence="3">
    <location>
        <begin position="219"/>
        <end position="237"/>
    </location>
</feature>
<feature type="compositionally biased region" description="Acidic residues" evidence="3">
    <location>
        <begin position="243"/>
        <end position="253"/>
    </location>
</feature>
<feature type="compositionally biased region" description="Basic and acidic residues" evidence="3">
    <location>
        <begin position="254"/>
        <end position="264"/>
    </location>
</feature>
<feature type="compositionally biased region" description="Low complexity" evidence="3">
    <location>
        <begin position="310"/>
        <end position="321"/>
    </location>
</feature>
<accession>Q503Z8</accession>
<accession>B5DDN4</accession>
<sequence length="477" mass="52408">MSFSQFGYPYNATSQFFVSATPSTTCCDSISRSVTEGSSASQTAASFCCPSYENRLLASTRTELNAALGMYGSPYAAAAAAAGQNYANYFPYSADPSAIYSSLNPQYEIKEGSGSLHSTITQPATYYPYDHSLGQYQYDRYGTVDFNGSTRRKNATRETTSTLKTWLYEHRKNPYPTKGEKIMLAIITKMTLTQVSTWFANARRRLKKENKMTWSPKNKAGDDRKEDLDSKDSKDEQDLQFSDLDDMEDEDCDKLDSDCEKSGQDDLPTSSPPKRDCNPDIPLHSNFPSFPCGLKSLGPLNPDYLDHLGSKPQQQQPSPQSTSINTVALSHFESSEKPRIWSLARTAAAGVVLGTQHVGDVRTGPVDCQMQGVRLPTVGAVQCGELKGLQDPTNLSNTESLFQEGLQGIHKAYSSGSFKTLQLHSSSYPGLTESCQYSSMEGFPSAGKTETESSELSDTCPTIQEAKTTAFRPVMKR</sequence>